<name>RSSA_ENCCU</name>
<feature type="chain" id="PRO_0000371633" description="Small ribosomal subunit protein uS2">
    <location>
        <begin position="1"/>
        <end position="252"/>
    </location>
</feature>
<dbReference type="EMBL" id="AL590444">
    <property type="protein sequence ID" value="CAD25232.1"/>
    <property type="molecule type" value="Genomic_DNA"/>
</dbReference>
<dbReference type="RefSeq" id="NP_584728.1">
    <property type="nucleotide sequence ID" value="NM_001041078.1"/>
</dbReference>
<dbReference type="PDB" id="7QEP">
    <property type="method" value="EM"/>
    <property type="resolution" value="2.70 A"/>
    <property type="chains" value="S0=1-252"/>
</dbReference>
<dbReference type="PDBsum" id="7QEP"/>
<dbReference type="EMDB" id="EMD-13936"/>
<dbReference type="SMR" id="Q8SS60"/>
<dbReference type="FunCoup" id="Q8SS60">
    <property type="interactions" value="188"/>
</dbReference>
<dbReference type="STRING" id="284813.Q8SS60"/>
<dbReference type="GeneID" id="858876"/>
<dbReference type="KEGG" id="ecu:ECU04_0450"/>
<dbReference type="VEuPathDB" id="MicrosporidiaDB:ECU04_0450"/>
<dbReference type="HOGENOM" id="CLU_058171_2_0_1"/>
<dbReference type="InParanoid" id="Q8SS60"/>
<dbReference type="OMA" id="QCHLGAK"/>
<dbReference type="OrthoDB" id="414863at2759"/>
<dbReference type="Proteomes" id="UP000000819">
    <property type="component" value="Chromosome IV"/>
</dbReference>
<dbReference type="GO" id="GO:0022627">
    <property type="term" value="C:cytosolic small ribosomal subunit"/>
    <property type="evidence" value="ECO:0007669"/>
    <property type="project" value="UniProtKB-UniRule"/>
</dbReference>
<dbReference type="GO" id="GO:0003735">
    <property type="term" value="F:structural constituent of ribosome"/>
    <property type="evidence" value="ECO:0007669"/>
    <property type="project" value="UniProtKB-UniRule"/>
</dbReference>
<dbReference type="GO" id="GO:0000028">
    <property type="term" value="P:ribosomal small subunit assembly"/>
    <property type="evidence" value="ECO:0007669"/>
    <property type="project" value="UniProtKB-UniRule"/>
</dbReference>
<dbReference type="GO" id="GO:0006412">
    <property type="term" value="P:translation"/>
    <property type="evidence" value="ECO:0007669"/>
    <property type="project" value="UniProtKB-UniRule"/>
</dbReference>
<dbReference type="Gene3D" id="3.40.50.10490">
    <property type="entry name" value="Glucose-6-phosphate isomerase like protein, domain 1"/>
    <property type="match status" value="1"/>
</dbReference>
<dbReference type="HAMAP" id="MF_03015">
    <property type="entry name" value="Ribosomal_S2_euk"/>
    <property type="match status" value="1"/>
</dbReference>
<dbReference type="InterPro" id="IPR001865">
    <property type="entry name" value="Ribosomal_uS2"/>
</dbReference>
<dbReference type="InterPro" id="IPR018130">
    <property type="entry name" value="Ribosomal_uS2_CS"/>
</dbReference>
<dbReference type="InterPro" id="IPR027498">
    <property type="entry name" value="Ribosomal_uS2_euk"/>
</dbReference>
<dbReference type="InterPro" id="IPR005707">
    <property type="entry name" value="Ribosomal_uS2_euk/arc"/>
</dbReference>
<dbReference type="InterPro" id="IPR023591">
    <property type="entry name" value="Ribosomal_uS2_flav_dom_sf"/>
</dbReference>
<dbReference type="PANTHER" id="PTHR11489">
    <property type="entry name" value="40S RIBOSOMAL PROTEIN SA"/>
    <property type="match status" value="1"/>
</dbReference>
<dbReference type="Pfam" id="PF00318">
    <property type="entry name" value="Ribosomal_S2"/>
    <property type="match status" value="2"/>
</dbReference>
<dbReference type="PRINTS" id="PR00395">
    <property type="entry name" value="RIBOSOMALS2"/>
</dbReference>
<dbReference type="SUPFAM" id="SSF52313">
    <property type="entry name" value="Ribosomal protein S2"/>
    <property type="match status" value="1"/>
</dbReference>
<dbReference type="PROSITE" id="PS00962">
    <property type="entry name" value="RIBOSOMAL_S2_1"/>
    <property type="match status" value="1"/>
</dbReference>
<dbReference type="PROSITE" id="PS00963">
    <property type="entry name" value="RIBOSOMAL_S2_2"/>
    <property type="match status" value="1"/>
</dbReference>
<proteinExistence type="evidence at protein level"/>
<accession>Q8SS60</accession>
<sequence>MPQDNTRISDSIKIPDEFVKLLIVSQSHLGGTSTNKSFARYLYGTRPRDRINIIDINATWEKLIIAARAFCGIKHPSSIAVVSTKTFGRKPVVKFCEAVGATPITGRFIPGSFTNSEVKRVYDPRVLIVSDTYADKQAILESQYCNLPTIAFVNTDNSLVGVDIAIPMNNRSPSAIAAGFFILSRLINYMKTGAELVRDMKEVELFLFRDSVELEQLVEEQLLETTDSILNVGKEGILSGIGTGNADEWNSF</sequence>
<organism>
    <name type="scientific">Encephalitozoon cuniculi (strain GB-M1)</name>
    <name type="common">Microsporidian parasite</name>
    <dbReference type="NCBI Taxonomy" id="284813"/>
    <lineage>
        <taxon>Eukaryota</taxon>
        <taxon>Fungi</taxon>
        <taxon>Fungi incertae sedis</taxon>
        <taxon>Microsporidia</taxon>
        <taxon>Unikaryonidae</taxon>
        <taxon>Encephalitozoon</taxon>
    </lineage>
</organism>
<protein>
    <recommendedName>
        <fullName evidence="1">Small ribosomal subunit protein uS2</fullName>
    </recommendedName>
    <alternativeName>
        <fullName evidence="3">40S ribosomal protein S0</fullName>
    </alternativeName>
</protein>
<gene>
    <name evidence="1" type="primary">RPS0</name>
    <name type="ordered locus">ECU04_0450</name>
</gene>
<reference key="1">
    <citation type="journal article" date="2001" name="Nature">
        <title>Genome sequence and gene compaction of the eukaryote parasite Encephalitozoon cuniculi.</title>
        <authorList>
            <person name="Katinka M.D."/>
            <person name="Duprat S."/>
            <person name="Cornillot E."/>
            <person name="Metenier G."/>
            <person name="Thomarat F."/>
            <person name="Prensier G."/>
            <person name="Barbe V."/>
            <person name="Peyretaillade E."/>
            <person name="Brottier P."/>
            <person name="Wincker P."/>
            <person name="Delbac F."/>
            <person name="El Alaoui H."/>
            <person name="Peyret P."/>
            <person name="Saurin W."/>
            <person name="Gouy M."/>
            <person name="Weissenbach J."/>
            <person name="Vivares C.P."/>
        </authorList>
    </citation>
    <scope>NUCLEOTIDE SEQUENCE [LARGE SCALE GENOMIC DNA]</scope>
    <source>
        <strain>GB-M1</strain>
    </source>
</reference>
<reference key="2">
    <citation type="journal article" date="2006" name="Proteomics">
        <title>Proteomic analysis of the eukaryotic parasite Encephalitozoon cuniculi (microsporidia): a reference map for proteins expressed in late sporogonial stages.</title>
        <authorList>
            <person name="Brosson D."/>
            <person name="Kuhn L."/>
            <person name="Delbac F."/>
            <person name="Garin J."/>
            <person name="Vivares C.P."/>
            <person name="Texier C."/>
        </authorList>
    </citation>
    <scope>IDENTIFICATION BY MASS SPECTROMETRY [LARGE SCALE ANALYSIS]</scope>
    <scope>DEVELOPMENTAL STAGE</scope>
</reference>
<keyword id="KW-0002">3D-structure</keyword>
<keyword id="KW-0963">Cytoplasm</keyword>
<keyword id="KW-1185">Reference proteome</keyword>
<keyword id="KW-0687">Ribonucleoprotein</keyword>
<keyword id="KW-0689">Ribosomal protein</keyword>
<comment type="function">
    <text evidence="1">Required for the assembly and/or stability of the 40S ribosomal subunit. Required for the processing of the 20S rRNA-precursor to mature 18S rRNA in a late step of the maturation of 40S ribosomal subunits.</text>
</comment>
<comment type="subunit">
    <text evidence="1">Component of the small ribosomal subunit. Mature ribosomes consist of a small (40S) and a large (60S) subunit. The 40S subunit contains about 33 different proteins and 1 molecule of RNA (18S). The 60S subunit contains about 49 different proteins and 3 molecules of RNA (25S, 5.8S and 5S). Interacts with RPS21.</text>
</comment>
<comment type="subcellular location">
    <subcellularLocation>
        <location evidence="1">Cytoplasm</location>
    </subcellularLocation>
</comment>
<comment type="developmental stage">
    <text evidence="2">Expressed in late sporogonial stages.</text>
</comment>
<comment type="similarity">
    <text evidence="1">Belongs to the universal ribosomal protein uS2 family.</text>
</comment>
<evidence type="ECO:0000255" key="1">
    <source>
        <dbReference type="HAMAP-Rule" id="MF_03015"/>
    </source>
</evidence>
<evidence type="ECO:0000269" key="2">
    <source>
    </source>
</evidence>
<evidence type="ECO:0000305" key="3"/>